<proteinExistence type="predicted"/>
<feature type="chain" id="PRO_0000348169" description="Uncharacterized protein DDB_G0272188">
    <location>
        <begin position="1"/>
        <end position="81"/>
    </location>
</feature>
<sequence length="81" mass="8813">MTIINNISTFGSKNNMANATQKIDFQNTTNQLNTSNNISNSLQSSAKINTTCDNSCSQNDIIIGGYKLPKSSELPYDCTIC</sequence>
<keyword id="KW-1185">Reference proteome</keyword>
<accession>Q75JW9</accession>
<accession>Q559W4</accession>
<organism>
    <name type="scientific">Dictyostelium discoideum</name>
    <name type="common">Social amoeba</name>
    <dbReference type="NCBI Taxonomy" id="44689"/>
    <lineage>
        <taxon>Eukaryota</taxon>
        <taxon>Amoebozoa</taxon>
        <taxon>Evosea</taxon>
        <taxon>Eumycetozoa</taxon>
        <taxon>Dictyostelia</taxon>
        <taxon>Dictyosteliales</taxon>
        <taxon>Dictyosteliaceae</taxon>
        <taxon>Dictyostelium</taxon>
    </lineage>
</organism>
<dbReference type="EMBL" id="AAFI02000008">
    <property type="protein sequence ID" value="EAL71246.1"/>
    <property type="molecule type" value="Genomic_DNA"/>
</dbReference>
<dbReference type="RefSeq" id="XP_645220.1">
    <property type="nucleotide sequence ID" value="XM_640128.1"/>
</dbReference>
<dbReference type="FunCoup" id="Q75JW9">
    <property type="interactions" value="877"/>
</dbReference>
<dbReference type="PaxDb" id="44689-DDB0168734"/>
<dbReference type="EnsemblProtists" id="EAL71246">
    <property type="protein sequence ID" value="EAL71246"/>
    <property type="gene ID" value="DDB_G0272188"/>
</dbReference>
<dbReference type="GeneID" id="8618390"/>
<dbReference type="KEGG" id="ddi:DDB_G0272188"/>
<dbReference type="dictyBase" id="DDB_G0272188"/>
<dbReference type="VEuPathDB" id="AmoebaDB:DDB_G0272188"/>
<dbReference type="HOGENOM" id="CLU_2578860_0_0_1"/>
<dbReference type="InParanoid" id="Q75JW9"/>
<dbReference type="PRO" id="PR:Q75JW9"/>
<dbReference type="Proteomes" id="UP000002195">
    <property type="component" value="Chromosome 2"/>
</dbReference>
<protein>
    <recommendedName>
        <fullName>Uncharacterized protein DDB_G0272188</fullName>
    </recommendedName>
</protein>
<reference key="1">
    <citation type="journal article" date="2002" name="Nature">
        <title>Sequence and analysis of chromosome 2 of Dictyostelium discoideum.</title>
        <authorList>
            <person name="Gloeckner G."/>
            <person name="Eichinger L."/>
            <person name="Szafranski K."/>
            <person name="Pachebat J.A."/>
            <person name="Bankier A.T."/>
            <person name="Dear P.H."/>
            <person name="Lehmann R."/>
            <person name="Baumgart C."/>
            <person name="Parra G."/>
            <person name="Abril J.F."/>
            <person name="Guigo R."/>
            <person name="Kumpf K."/>
            <person name="Tunggal B."/>
            <person name="Cox E.C."/>
            <person name="Quail M.A."/>
            <person name="Platzer M."/>
            <person name="Rosenthal A."/>
            <person name="Noegel A.A."/>
        </authorList>
    </citation>
    <scope>NUCLEOTIDE SEQUENCE [LARGE SCALE GENOMIC DNA]</scope>
    <source>
        <strain>AX4</strain>
    </source>
</reference>
<reference key="2">
    <citation type="journal article" date="2005" name="Nature">
        <title>The genome of the social amoeba Dictyostelium discoideum.</title>
        <authorList>
            <person name="Eichinger L."/>
            <person name="Pachebat J.A."/>
            <person name="Gloeckner G."/>
            <person name="Rajandream M.A."/>
            <person name="Sucgang R."/>
            <person name="Berriman M."/>
            <person name="Song J."/>
            <person name="Olsen R."/>
            <person name="Szafranski K."/>
            <person name="Xu Q."/>
            <person name="Tunggal B."/>
            <person name="Kummerfeld S."/>
            <person name="Madera M."/>
            <person name="Konfortov B.A."/>
            <person name="Rivero F."/>
            <person name="Bankier A.T."/>
            <person name="Lehmann R."/>
            <person name="Hamlin N."/>
            <person name="Davies R."/>
            <person name="Gaudet P."/>
            <person name="Fey P."/>
            <person name="Pilcher K."/>
            <person name="Chen G."/>
            <person name="Saunders D."/>
            <person name="Sodergren E.J."/>
            <person name="Davis P."/>
            <person name="Kerhornou A."/>
            <person name="Nie X."/>
            <person name="Hall N."/>
            <person name="Anjard C."/>
            <person name="Hemphill L."/>
            <person name="Bason N."/>
            <person name="Farbrother P."/>
            <person name="Desany B."/>
            <person name="Just E."/>
            <person name="Morio T."/>
            <person name="Rost R."/>
            <person name="Churcher C.M."/>
            <person name="Cooper J."/>
            <person name="Haydock S."/>
            <person name="van Driessche N."/>
            <person name="Cronin A."/>
            <person name="Goodhead I."/>
            <person name="Muzny D.M."/>
            <person name="Mourier T."/>
            <person name="Pain A."/>
            <person name="Lu M."/>
            <person name="Harper D."/>
            <person name="Lindsay R."/>
            <person name="Hauser H."/>
            <person name="James K.D."/>
            <person name="Quiles M."/>
            <person name="Madan Babu M."/>
            <person name="Saito T."/>
            <person name="Buchrieser C."/>
            <person name="Wardroper A."/>
            <person name="Felder M."/>
            <person name="Thangavelu M."/>
            <person name="Johnson D."/>
            <person name="Knights A."/>
            <person name="Loulseged H."/>
            <person name="Mungall K.L."/>
            <person name="Oliver K."/>
            <person name="Price C."/>
            <person name="Quail M.A."/>
            <person name="Urushihara H."/>
            <person name="Hernandez J."/>
            <person name="Rabbinowitsch E."/>
            <person name="Steffen D."/>
            <person name="Sanders M."/>
            <person name="Ma J."/>
            <person name="Kohara Y."/>
            <person name="Sharp S."/>
            <person name="Simmonds M.N."/>
            <person name="Spiegler S."/>
            <person name="Tivey A."/>
            <person name="Sugano S."/>
            <person name="White B."/>
            <person name="Walker D."/>
            <person name="Woodward J.R."/>
            <person name="Winckler T."/>
            <person name="Tanaka Y."/>
            <person name="Shaulsky G."/>
            <person name="Schleicher M."/>
            <person name="Weinstock G.M."/>
            <person name="Rosenthal A."/>
            <person name="Cox E.C."/>
            <person name="Chisholm R.L."/>
            <person name="Gibbs R.A."/>
            <person name="Loomis W.F."/>
            <person name="Platzer M."/>
            <person name="Kay R.R."/>
            <person name="Williams J.G."/>
            <person name="Dear P.H."/>
            <person name="Noegel A.A."/>
            <person name="Barrell B.G."/>
            <person name="Kuspa A."/>
        </authorList>
    </citation>
    <scope>NUCLEOTIDE SEQUENCE [LARGE SCALE GENOMIC DNA]</scope>
    <source>
        <strain>AX4</strain>
    </source>
</reference>
<name>Y8734_DICDI</name>
<gene>
    <name type="ORF">DDB_G0272188</name>
</gene>